<sequence length="147" mass="16460">MNREEVTDLIVTQKVKKKLTWAQLAEVVGHSKEWSTAALLGQMTLTEAQAKAIGTTLDLPEEAVTQLQVVPYKGSLPTAVPTDPLIYRFYELISVYGTTFKSLIHEEFGDGIMSAIDFNMDLTREADPKGDRVRITMSGKFLPYKTY</sequence>
<name>CYNS_DECAR</name>
<dbReference type="EC" id="4.2.1.104" evidence="1"/>
<dbReference type="EMBL" id="CP000089">
    <property type="protein sequence ID" value="AAZ46191.1"/>
    <property type="molecule type" value="Genomic_DNA"/>
</dbReference>
<dbReference type="SMR" id="Q47G40"/>
<dbReference type="STRING" id="159087.Daro_1442"/>
<dbReference type="KEGG" id="dar:Daro_1442"/>
<dbReference type="eggNOG" id="COG1513">
    <property type="taxonomic scope" value="Bacteria"/>
</dbReference>
<dbReference type="HOGENOM" id="CLU_103452_1_1_4"/>
<dbReference type="OrthoDB" id="9785870at2"/>
<dbReference type="GO" id="GO:0008824">
    <property type="term" value="F:cyanate hydratase activity"/>
    <property type="evidence" value="ECO:0007669"/>
    <property type="project" value="UniProtKB-UniRule"/>
</dbReference>
<dbReference type="GO" id="GO:0003677">
    <property type="term" value="F:DNA binding"/>
    <property type="evidence" value="ECO:0007669"/>
    <property type="project" value="InterPro"/>
</dbReference>
<dbReference type="GO" id="GO:0009439">
    <property type="term" value="P:cyanate metabolic process"/>
    <property type="evidence" value="ECO:0007669"/>
    <property type="project" value="UniProtKB-UniRule"/>
</dbReference>
<dbReference type="CDD" id="cd00559">
    <property type="entry name" value="Cyanase_C"/>
    <property type="match status" value="1"/>
</dbReference>
<dbReference type="Gene3D" id="3.30.1160.10">
    <property type="entry name" value="Cyanate lyase, C-terminal domain"/>
    <property type="match status" value="1"/>
</dbReference>
<dbReference type="Gene3D" id="1.10.260.40">
    <property type="entry name" value="lambda repressor-like DNA-binding domains"/>
    <property type="match status" value="1"/>
</dbReference>
<dbReference type="HAMAP" id="MF_00535">
    <property type="entry name" value="Cyanate_hydrat"/>
    <property type="match status" value="1"/>
</dbReference>
<dbReference type="InterPro" id="IPR008076">
    <property type="entry name" value="Cyanase"/>
</dbReference>
<dbReference type="InterPro" id="IPR003712">
    <property type="entry name" value="Cyanate_lyase_C"/>
</dbReference>
<dbReference type="InterPro" id="IPR036581">
    <property type="entry name" value="Cyanate_lyase_C_sf"/>
</dbReference>
<dbReference type="InterPro" id="IPR048564">
    <property type="entry name" value="CYNS_N"/>
</dbReference>
<dbReference type="InterPro" id="IPR010982">
    <property type="entry name" value="Lambda_DNA-bd_dom_sf"/>
</dbReference>
<dbReference type="NCBIfam" id="TIGR00673">
    <property type="entry name" value="cynS"/>
    <property type="match status" value="1"/>
</dbReference>
<dbReference type="NCBIfam" id="NF002773">
    <property type="entry name" value="PRK02866.1"/>
    <property type="match status" value="1"/>
</dbReference>
<dbReference type="PANTHER" id="PTHR34186">
    <property type="entry name" value="CYANATE HYDRATASE"/>
    <property type="match status" value="1"/>
</dbReference>
<dbReference type="PANTHER" id="PTHR34186:SF2">
    <property type="entry name" value="CYANATE HYDRATASE"/>
    <property type="match status" value="1"/>
</dbReference>
<dbReference type="Pfam" id="PF02560">
    <property type="entry name" value="Cyanate_lyase"/>
    <property type="match status" value="1"/>
</dbReference>
<dbReference type="Pfam" id="PF21291">
    <property type="entry name" value="CYNS_N"/>
    <property type="match status" value="1"/>
</dbReference>
<dbReference type="PIRSF" id="PIRSF001263">
    <property type="entry name" value="Cyanate_hydratas"/>
    <property type="match status" value="1"/>
</dbReference>
<dbReference type="PRINTS" id="PR01693">
    <property type="entry name" value="CYANASE"/>
</dbReference>
<dbReference type="SMART" id="SM01116">
    <property type="entry name" value="Cyanate_lyase"/>
    <property type="match status" value="1"/>
</dbReference>
<dbReference type="SUPFAM" id="SSF55234">
    <property type="entry name" value="Cyanase C-terminal domain"/>
    <property type="match status" value="1"/>
</dbReference>
<dbReference type="SUPFAM" id="SSF47413">
    <property type="entry name" value="lambda repressor-like DNA-binding domains"/>
    <property type="match status" value="1"/>
</dbReference>
<accession>Q47G40</accession>
<protein>
    <recommendedName>
        <fullName evidence="1">Cyanate hydratase</fullName>
        <shortName evidence="1">Cyanase</shortName>
        <ecNumber evidence="1">4.2.1.104</ecNumber>
    </recommendedName>
    <alternativeName>
        <fullName evidence="1">Cyanate hydrolase</fullName>
    </alternativeName>
    <alternativeName>
        <fullName evidence="1">Cyanate lyase</fullName>
    </alternativeName>
</protein>
<evidence type="ECO:0000255" key="1">
    <source>
        <dbReference type="HAMAP-Rule" id="MF_00535"/>
    </source>
</evidence>
<comment type="function">
    <text evidence="1">Catalyzes the reaction of cyanate with bicarbonate to produce ammonia and carbon dioxide.</text>
</comment>
<comment type="catalytic activity">
    <reaction evidence="1">
        <text>cyanate + hydrogencarbonate + 3 H(+) = NH4(+) + 2 CO2</text>
        <dbReference type="Rhea" id="RHEA:11120"/>
        <dbReference type="ChEBI" id="CHEBI:15378"/>
        <dbReference type="ChEBI" id="CHEBI:16526"/>
        <dbReference type="ChEBI" id="CHEBI:17544"/>
        <dbReference type="ChEBI" id="CHEBI:28938"/>
        <dbReference type="ChEBI" id="CHEBI:29195"/>
        <dbReference type="EC" id="4.2.1.104"/>
    </reaction>
</comment>
<comment type="similarity">
    <text evidence="1">Belongs to the cyanase family.</text>
</comment>
<keyword id="KW-0456">Lyase</keyword>
<proteinExistence type="inferred from homology"/>
<reference key="1">
    <citation type="journal article" date="2009" name="BMC Genomics">
        <title>Metabolic analysis of the soil microbe Dechloromonas aromatica str. RCB: indications of a surprisingly complex life-style and cryptic anaerobic pathways for aromatic degradation.</title>
        <authorList>
            <person name="Salinero K.K."/>
            <person name="Keller K."/>
            <person name="Feil W.S."/>
            <person name="Feil H."/>
            <person name="Trong S."/>
            <person name="Di Bartolo G."/>
            <person name="Lapidus A."/>
        </authorList>
    </citation>
    <scope>NUCLEOTIDE SEQUENCE [LARGE SCALE GENOMIC DNA]</scope>
    <source>
        <strain>RCB</strain>
    </source>
</reference>
<organism>
    <name type="scientific">Dechloromonas aromatica (strain RCB)</name>
    <dbReference type="NCBI Taxonomy" id="159087"/>
    <lineage>
        <taxon>Bacteria</taxon>
        <taxon>Pseudomonadati</taxon>
        <taxon>Pseudomonadota</taxon>
        <taxon>Betaproteobacteria</taxon>
        <taxon>Rhodocyclales</taxon>
        <taxon>Azonexaceae</taxon>
        <taxon>Dechloromonas</taxon>
    </lineage>
</organism>
<feature type="chain" id="PRO_1000072533" description="Cyanate hydratase">
    <location>
        <begin position="1"/>
        <end position="147"/>
    </location>
</feature>
<feature type="active site" evidence="1">
    <location>
        <position position="88"/>
    </location>
</feature>
<feature type="active site" evidence="1">
    <location>
        <position position="91"/>
    </location>
</feature>
<feature type="active site" evidence="1">
    <location>
        <position position="114"/>
    </location>
</feature>
<gene>
    <name evidence="1" type="primary">cynS</name>
    <name type="ordered locus">Daro_1442</name>
</gene>